<sequence>MQAKAVARTVRIAPRKVRLVVDLIRGKQVGEAIAILNHTPKTASPVVEKVLKSAIANAEHNYEMDINSLVVEKVFVDEGPTLKRFRPRAMGRASQINKRTSHITVVVSEKKEG</sequence>
<accession>C3LJ87</accession>
<gene>
    <name evidence="1" type="primary">rplV</name>
    <name type="ordered locus">BAMEG_0131</name>
</gene>
<feature type="chain" id="PRO_1000166042" description="Large ribosomal subunit protein uL22">
    <location>
        <begin position="1"/>
        <end position="113"/>
    </location>
</feature>
<keyword id="KW-0687">Ribonucleoprotein</keyword>
<keyword id="KW-0689">Ribosomal protein</keyword>
<keyword id="KW-0694">RNA-binding</keyword>
<keyword id="KW-0699">rRNA-binding</keyword>
<reference key="1">
    <citation type="submission" date="2008-10" db="EMBL/GenBank/DDBJ databases">
        <title>Genome sequence of Bacillus anthracis str. CDC 684.</title>
        <authorList>
            <person name="Dodson R.J."/>
            <person name="Munk A.C."/>
            <person name="Brettin T."/>
            <person name="Bruce D."/>
            <person name="Detter C."/>
            <person name="Tapia R."/>
            <person name="Han C."/>
            <person name="Sutton G."/>
            <person name="Sims D."/>
        </authorList>
    </citation>
    <scope>NUCLEOTIDE SEQUENCE [LARGE SCALE GENOMIC DNA]</scope>
    <source>
        <strain>CDC 684 / NRRL 3495</strain>
    </source>
</reference>
<comment type="function">
    <text evidence="1">This protein binds specifically to 23S rRNA; its binding is stimulated by other ribosomal proteins, e.g. L4, L17, and L20. It is important during the early stages of 50S assembly. It makes multiple contacts with different domains of the 23S rRNA in the assembled 50S subunit and ribosome (By similarity).</text>
</comment>
<comment type="function">
    <text evidence="1">The globular domain of the protein is located near the polypeptide exit tunnel on the outside of the subunit, while an extended beta-hairpin is found that lines the wall of the exit tunnel in the center of the 70S ribosome.</text>
</comment>
<comment type="subunit">
    <text evidence="1">Part of the 50S ribosomal subunit.</text>
</comment>
<comment type="similarity">
    <text evidence="1">Belongs to the universal ribosomal protein uL22 family.</text>
</comment>
<organism>
    <name type="scientific">Bacillus anthracis (strain CDC 684 / NRRL 3495)</name>
    <dbReference type="NCBI Taxonomy" id="568206"/>
    <lineage>
        <taxon>Bacteria</taxon>
        <taxon>Bacillati</taxon>
        <taxon>Bacillota</taxon>
        <taxon>Bacilli</taxon>
        <taxon>Bacillales</taxon>
        <taxon>Bacillaceae</taxon>
        <taxon>Bacillus</taxon>
        <taxon>Bacillus cereus group</taxon>
    </lineage>
</organism>
<name>RL22_BACAC</name>
<dbReference type="EMBL" id="CP001215">
    <property type="protein sequence ID" value="ACP12139.1"/>
    <property type="molecule type" value="Genomic_DNA"/>
</dbReference>
<dbReference type="RefSeq" id="WP_001148025.1">
    <property type="nucleotide sequence ID" value="NC_012581.1"/>
</dbReference>
<dbReference type="SMR" id="C3LJ87"/>
<dbReference type="GeneID" id="93010938"/>
<dbReference type="KEGG" id="bah:BAMEG_0131"/>
<dbReference type="HOGENOM" id="CLU_083987_3_3_9"/>
<dbReference type="GO" id="GO:0022625">
    <property type="term" value="C:cytosolic large ribosomal subunit"/>
    <property type="evidence" value="ECO:0007669"/>
    <property type="project" value="TreeGrafter"/>
</dbReference>
<dbReference type="GO" id="GO:0019843">
    <property type="term" value="F:rRNA binding"/>
    <property type="evidence" value="ECO:0007669"/>
    <property type="project" value="UniProtKB-UniRule"/>
</dbReference>
<dbReference type="GO" id="GO:0003735">
    <property type="term" value="F:structural constituent of ribosome"/>
    <property type="evidence" value="ECO:0007669"/>
    <property type="project" value="InterPro"/>
</dbReference>
<dbReference type="GO" id="GO:0006412">
    <property type="term" value="P:translation"/>
    <property type="evidence" value="ECO:0007669"/>
    <property type="project" value="UniProtKB-UniRule"/>
</dbReference>
<dbReference type="CDD" id="cd00336">
    <property type="entry name" value="Ribosomal_L22"/>
    <property type="match status" value="1"/>
</dbReference>
<dbReference type="FunFam" id="3.90.470.10:FF:000001">
    <property type="entry name" value="50S ribosomal protein L22"/>
    <property type="match status" value="1"/>
</dbReference>
<dbReference type="Gene3D" id="3.90.470.10">
    <property type="entry name" value="Ribosomal protein L22/L17"/>
    <property type="match status" value="1"/>
</dbReference>
<dbReference type="HAMAP" id="MF_01331_B">
    <property type="entry name" value="Ribosomal_uL22_B"/>
    <property type="match status" value="1"/>
</dbReference>
<dbReference type="InterPro" id="IPR001063">
    <property type="entry name" value="Ribosomal_uL22"/>
</dbReference>
<dbReference type="InterPro" id="IPR005727">
    <property type="entry name" value="Ribosomal_uL22_bac/chlpt-type"/>
</dbReference>
<dbReference type="InterPro" id="IPR047867">
    <property type="entry name" value="Ribosomal_uL22_bac/org-type"/>
</dbReference>
<dbReference type="InterPro" id="IPR018260">
    <property type="entry name" value="Ribosomal_uL22_CS"/>
</dbReference>
<dbReference type="InterPro" id="IPR036394">
    <property type="entry name" value="Ribosomal_uL22_sf"/>
</dbReference>
<dbReference type="NCBIfam" id="TIGR01044">
    <property type="entry name" value="rplV_bact"/>
    <property type="match status" value="1"/>
</dbReference>
<dbReference type="PANTHER" id="PTHR13501">
    <property type="entry name" value="CHLOROPLAST 50S RIBOSOMAL PROTEIN L22-RELATED"/>
    <property type="match status" value="1"/>
</dbReference>
<dbReference type="PANTHER" id="PTHR13501:SF8">
    <property type="entry name" value="LARGE RIBOSOMAL SUBUNIT PROTEIN UL22M"/>
    <property type="match status" value="1"/>
</dbReference>
<dbReference type="Pfam" id="PF00237">
    <property type="entry name" value="Ribosomal_L22"/>
    <property type="match status" value="1"/>
</dbReference>
<dbReference type="SUPFAM" id="SSF54843">
    <property type="entry name" value="Ribosomal protein L22"/>
    <property type="match status" value="1"/>
</dbReference>
<dbReference type="PROSITE" id="PS00464">
    <property type="entry name" value="RIBOSOMAL_L22"/>
    <property type="match status" value="1"/>
</dbReference>
<protein>
    <recommendedName>
        <fullName evidence="1">Large ribosomal subunit protein uL22</fullName>
    </recommendedName>
    <alternativeName>
        <fullName evidence="2">50S ribosomal protein L22</fullName>
    </alternativeName>
</protein>
<evidence type="ECO:0000255" key="1">
    <source>
        <dbReference type="HAMAP-Rule" id="MF_01331"/>
    </source>
</evidence>
<evidence type="ECO:0000305" key="2"/>
<proteinExistence type="inferred from homology"/>